<sequence>MRRERGRRARRRVCSFCVDKIEHVDYKDAARLKRYITERGKILPRRISGNCARHQRQLTVAIKRARIMALLPFTVE</sequence>
<accession>Q67J50</accession>
<gene>
    <name evidence="1" type="primary">rpsR</name>
    <name type="ordered locus">STH3319</name>
</gene>
<proteinExistence type="inferred from homology"/>
<protein>
    <recommendedName>
        <fullName evidence="1">Small ribosomal subunit protein bS18</fullName>
    </recommendedName>
    <alternativeName>
        <fullName evidence="2">30S ribosomal protein S18</fullName>
    </alternativeName>
</protein>
<evidence type="ECO:0000255" key="1">
    <source>
        <dbReference type="HAMAP-Rule" id="MF_00270"/>
    </source>
</evidence>
<evidence type="ECO:0000305" key="2"/>
<name>RS18_SYMTH</name>
<organism>
    <name type="scientific">Symbiobacterium thermophilum (strain DSM 24528 / JCM 14929 / IAM 14863 / T)</name>
    <dbReference type="NCBI Taxonomy" id="292459"/>
    <lineage>
        <taxon>Bacteria</taxon>
        <taxon>Bacillati</taxon>
        <taxon>Bacillota</taxon>
        <taxon>Clostridia</taxon>
        <taxon>Eubacteriales</taxon>
        <taxon>Symbiobacteriaceae</taxon>
        <taxon>Symbiobacterium</taxon>
    </lineage>
</organism>
<reference key="1">
    <citation type="journal article" date="2004" name="Nucleic Acids Res.">
        <title>Genome sequence of Symbiobacterium thermophilum, an uncultivable bacterium that depends on microbial commensalism.</title>
        <authorList>
            <person name="Ueda K."/>
            <person name="Yamashita A."/>
            <person name="Ishikawa J."/>
            <person name="Shimada M."/>
            <person name="Watsuji T."/>
            <person name="Morimura K."/>
            <person name="Ikeda H."/>
            <person name="Hattori M."/>
            <person name="Beppu T."/>
        </authorList>
    </citation>
    <scope>NUCLEOTIDE SEQUENCE [LARGE SCALE GENOMIC DNA]</scope>
    <source>
        <strain>DSM 24528 / JCM 14929 / IAM 14863 / T</strain>
    </source>
</reference>
<comment type="function">
    <text evidence="1">Binds as a heterodimer with protein bS6 to the central domain of the 16S rRNA, where it helps stabilize the platform of the 30S subunit.</text>
</comment>
<comment type="subunit">
    <text evidence="1">Part of the 30S ribosomal subunit. Forms a tight heterodimer with protein bS6.</text>
</comment>
<comment type="similarity">
    <text evidence="1">Belongs to the bacterial ribosomal protein bS18 family.</text>
</comment>
<comment type="sequence caution" evidence="2">
    <conflict type="erroneous initiation">
        <sequence resource="EMBL-CDS" id="BAD42300"/>
    </conflict>
</comment>
<feature type="chain" id="PRO_0000345553" description="Small ribosomal subunit protein bS18">
    <location>
        <begin position="1"/>
        <end position="76"/>
    </location>
</feature>
<dbReference type="EMBL" id="AP006840">
    <property type="protein sequence ID" value="BAD42300.1"/>
    <property type="status" value="ALT_INIT"/>
    <property type="molecule type" value="Genomic_DNA"/>
</dbReference>
<dbReference type="RefSeq" id="WP_011197430.1">
    <property type="nucleotide sequence ID" value="NC_006177.1"/>
</dbReference>
<dbReference type="SMR" id="Q67J50"/>
<dbReference type="STRING" id="292459.STH3319"/>
<dbReference type="KEGG" id="sth:STH3319"/>
<dbReference type="eggNOG" id="COG0238">
    <property type="taxonomic scope" value="Bacteria"/>
</dbReference>
<dbReference type="HOGENOM" id="CLU_148710_2_2_9"/>
<dbReference type="OrthoDB" id="9812008at2"/>
<dbReference type="Proteomes" id="UP000000417">
    <property type="component" value="Chromosome"/>
</dbReference>
<dbReference type="GO" id="GO:0022627">
    <property type="term" value="C:cytosolic small ribosomal subunit"/>
    <property type="evidence" value="ECO:0007669"/>
    <property type="project" value="TreeGrafter"/>
</dbReference>
<dbReference type="GO" id="GO:0070181">
    <property type="term" value="F:small ribosomal subunit rRNA binding"/>
    <property type="evidence" value="ECO:0007669"/>
    <property type="project" value="TreeGrafter"/>
</dbReference>
<dbReference type="GO" id="GO:0003735">
    <property type="term" value="F:structural constituent of ribosome"/>
    <property type="evidence" value="ECO:0007669"/>
    <property type="project" value="InterPro"/>
</dbReference>
<dbReference type="GO" id="GO:0006412">
    <property type="term" value="P:translation"/>
    <property type="evidence" value="ECO:0007669"/>
    <property type="project" value="UniProtKB-UniRule"/>
</dbReference>
<dbReference type="FunFam" id="4.10.640.10:FF:000004">
    <property type="entry name" value="30S ribosomal protein S18"/>
    <property type="match status" value="1"/>
</dbReference>
<dbReference type="Gene3D" id="4.10.640.10">
    <property type="entry name" value="Ribosomal protein S18"/>
    <property type="match status" value="1"/>
</dbReference>
<dbReference type="HAMAP" id="MF_00270">
    <property type="entry name" value="Ribosomal_bS18"/>
    <property type="match status" value="1"/>
</dbReference>
<dbReference type="InterPro" id="IPR001648">
    <property type="entry name" value="Ribosomal_bS18"/>
</dbReference>
<dbReference type="InterPro" id="IPR036870">
    <property type="entry name" value="Ribosomal_bS18_sf"/>
</dbReference>
<dbReference type="NCBIfam" id="TIGR00165">
    <property type="entry name" value="S18"/>
    <property type="match status" value="1"/>
</dbReference>
<dbReference type="PANTHER" id="PTHR13479">
    <property type="entry name" value="30S RIBOSOMAL PROTEIN S18"/>
    <property type="match status" value="1"/>
</dbReference>
<dbReference type="PANTHER" id="PTHR13479:SF40">
    <property type="entry name" value="SMALL RIBOSOMAL SUBUNIT PROTEIN BS18M"/>
    <property type="match status" value="1"/>
</dbReference>
<dbReference type="Pfam" id="PF01084">
    <property type="entry name" value="Ribosomal_S18"/>
    <property type="match status" value="1"/>
</dbReference>
<dbReference type="PRINTS" id="PR00974">
    <property type="entry name" value="RIBOSOMALS18"/>
</dbReference>
<dbReference type="SUPFAM" id="SSF46911">
    <property type="entry name" value="Ribosomal protein S18"/>
    <property type="match status" value="1"/>
</dbReference>
<keyword id="KW-1185">Reference proteome</keyword>
<keyword id="KW-0687">Ribonucleoprotein</keyword>
<keyword id="KW-0689">Ribosomal protein</keyword>
<keyword id="KW-0694">RNA-binding</keyword>
<keyword id="KW-0699">rRNA-binding</keyword>